<accession>Q5VJ55</accession>
<evidence type="ECO:0000250" key="1"/>
<evidence type="ECO:0000250" key="2">
    <source>
        <dbReference type="UniProtKB" id="P00157"/>
    </source>
</evidence>
<evidence type="ECO:0000255" key="3">
    <source>
        <dbReference type="PROSITE-ProRule" id="PRU00967"/>
    </source>
</evidence>
<evidence type="ECO:0000255" key="4">
    <source>
        <dbReference type="PROSITE-ProRule" id="PRU00968"/>
    </source>
</evidence>
<gene>
    <name type="primary">MT-CYB</name>
    <name type="synonym">COB</name>
    <name type="synonym">CYTB</name>
    <name type="synonym">MTCYB</name>
</gene>
<sequence length="379" mass="42950">MTNIRKTHPLMKIMNSSFIDLPAPSNISSWWNFGSLLGACLAIQIITGLFLAMHYTADTTTAFSSVTHICRDVNHGWIIRYIHANGASMFFLCLFIHVGRGMYYGSFTMLETWNIGIILLFTVMATAFMGYVLPWGQMSFWGATVITNLLSAIPYIGTVLVEWIWGGFSVDKATLTRFFAFHFILPFIIAALVMVHLLFLHETGSNNPLGISSDSDKIPFHPYYTMKDLLGLLFFLILHLTLVLFSPDLLGDPDNYTPANPLSTPPHIKPEWYFLFAYAILRSIPNKLGGVMALVLSILILTFIPMLQTTKQRSMLFRPLSQILFWILTADLFILTWIGAQQVEYPFITIGQMASILYFSIILIIMPTVSLMENKMLKW</sequence>
<organism>
    <name type="scientific">Cheirogaleus medius</name>
    <name type="common">Fat-tailed dwarf lemur</name>
    <dbReference type="NCBI Taxonomy" id="9460"/>
    <lineage>
        <taxon>Eukaryota</taxon>
        <taxon>Metazoa</taxon>
        <taxon>Chordata</taxon>
        <taxon>Craniata</taxon>
        <taxon>Vertebrata</taxon>
        <taxon>Euteleostomi</taxon>
        <taxon>Mammalia</taxon>
        <taxon>Eutheria</taxon>
        <taxon>Euarchontoglires</taxon>
        <taxon>Primates</taxon>
        <taxon>Strepsirrhini</taxon>
        <taxon>Lemuriformes</taxon>
        <taxon>Cheirogaleidae</taxon>
        <taxon>Cheirogaleus</taxon>
    </lineage>
</organism>
<dbReference type="EMBL" id="AY441458">
    <property type="protein sequence ID" value="AAS00139.1"/>
    <property type="molecule type" value="Genomic_DNA"/>
</dbReference>
<dbReference type="SMR" id="Q5VJ55"/>
<dbReference type="GO" id="GO:0005743">
    <property type="term" value="C:mitochondrial inner membrane"/>
    <property type="evidence" value="ECO:0007669"/>
    <property type="project" value="UniProtKB-SubCell"/>
</dbReference>
<dbReference type="GO" id="GO:0045275">
    <property type="term" value="C:respiratory chain complex III"/>
    <property type="evidence" value="ECO:0007669"/>
    <property type="project" value="InterPro"/>
</dbReference>
<dbReference type="GO" id="GO:0046872">
    <property type="term" value="F:metal ion binding"/>
    <property type="evidence" value="ECO:0007669"/>
    <property type="project" value="UniProtKB-KW"/>
</dbReference>
<dbReference type="GO" id="GO:0008121">
    <property type="term" value="F:ubiquinol-cytochrome-c reductase activity"/>
    <property type="evidence" value="ECO:0007669"/>
    <property type="project" value="InterPro"/>
</dbReference>
<dbReference type="GO" id="GO:0006122">
    <property type="term" value="P:mitochondrial electron transport, ubiquinol to cytochrome c"/>
    <property type="evidence" value="ECO:0007669"/>
    <property type="project" value="TreeGrafter"/>
</dbReference>
<dbReference type="CDD" id="cd00290">
    <property type="entry name" value="cytochrome_b_C"/>
    <property type="match status" value="1"/>
</dbReference>
<dbReference type="CDD" id="cd00284">
    <property type="entry name" value="Cytochrome_b_N"/>
    <property type="match status" value="1"/>
</dbReference>
<dbReference type="FunFam" id="1.20.810.10:FF:000002">
    <property type="entry name" value="Cytochrome b"/>
    <property type="match status" value="1"/>
</dbReference>
<dbReference type="Gene3D" id="1.20.810.10">
    <property type="entry name" value="Cytochrome Bc1 Complex, Chain C"/>
    <property type="match status" value="1"/>
</dbReference>
<dbReference type="InterPro" id="IPR005798">
    <property type="entry name" value="Cyt_b/b6_C"/>
</dbReference>
<dbReference type="InterPro" id="IPR036150">
    <property type="entry name" value="Cyt_b/b6_C_sf"/>
</dbReference>
<dbReference type="InterPro" id="IPR005797">
    <property type="entry name" value="Cyt_b/b6_N"/>
</dbReference>
<dbReference type="InterPro" id="IPR027387">
    <property type="entry name" value="Cytb/b6-like_sf"/>
</dbReference>
<dbReference type="InterPro" id="IPR030689">
    <property type="entry name" value="Cytochrome_b"/>
</dbReference>
<dbReference type="InterPro" id="IPR048260">
    <property type="entry name" value="Cytochrome_b_C_euk/bac"/>
</dbReference>
<dbReference type="InterPro" id="IPR048259">
    <property type="entry name" value="Cytochrome_b_N_euk/bac"/>
</dbReference>
<dbReference type="InterPro" id="IPR016174">
    <property type="entry name" value="Di-haem_cyt_TM"/>
</dbReference>
<dbReference type="PANTHER" id="PTHR19271">
    <property type="entry name" value="CYTOCHROME B"/>
    <property type="match status" value="1"/>
</dbReference>
<dbReference type="PANTHER" id="PTHR19271:SF16">
    <property type="entry name" value="CYTOCHROME B"/>
    <property type="match status" value="1"/>
</dbReference>
<dbReference type="Pfam" id="PF00032">
    <property type="entry name" value="Cytochrom_B_C"/>
    <property type="match status" value="1"/>
</dbReference>
<dbReference type="Pfam" id="PF00033">
    <property type="entry name" value="Cytochrome_B"/>
    <property type="match status" value="1"/>
</dbReference>
<dbReference type="PIRSF" id="PIRSF038885">
    <property type="entry name" value="COB"/>
    <property type="match status" value="1"/>
</dbReference>
<dbReference type="SUPFAM" id="SSF81648">
    <property type="entry name" value="a domain/subunit of cytochrome bc1 complex (Ubiquinol-cytochrome c reductase)"/>
    <property type="match status" value="1"/>
</dbReference>
<dbReference type="SUPFAM" id="SSF81342">
    <property type="entry name" value="Transmembrane di-heme cytochromes"/>
    <property type="match status" value="1"/>
</dbReference>
<dbReference type="PROSITE" id="PS51003">
    <property type="entry name" value="CYTB_CTER"/>
    <property type="match status" value="1"/>
</dbReference>
<dbReference type="PROSITE" id="PS51002">
    <property type="entry name" value="CYTB_NTER"/>
    <property type="match status" value="1"/>
</dbReference>
<reference key="1">
    <citation type="submission" date="2003-10" db="EMBL/GenBank/DDBJ databases">
        <title>61 primate SINEs and the evolution of strepsirrhines.</title>
        <authorList>
            <person name="Roos C."/>
            <person name="Schmitz J."/>
            <person name="Zischler H."/>
        </authorList>
    </citation>
    <scope>NUCLEOTIDE SEQUENCE [GENOMIC DNA]</scope>
</reference>
<feature type="chain" id="PRO_0000060774" description="Cytochrome b">
    <location>
        <begin position="1"/>
        <end position="379"/>
    </location>
</feature>
<feature type="transmembrane region" description="Helical" evidence="2">
    <location>
        <begin position="33"/>
        <end position="53"/>
    </location>
</feature>
<feature type="transmembrane region" description="Helical" evidence="2">
    <location>
        <begin position="77"/>
        <end position="98"/>
    </location>
</feature>
<feature type="transmembrane region" description="Helical" evidence="2">
    <location>
        <begin position="113"/>
        <end position="133"/>
    </location>
</feature>
<feature type="transmembrane region" description="Helical" evidence="2">
    <location>
        <begin position="178"/>
        <end position="198"/>
    </location>
</feature>
<feature type="transmembrane region" description="Helical" evidence="2">
    <location>
        <begin position="226"/>
        <end position="246"/>
    </location>
</feature>
<feature type="transmembrane region" description="Helical" evidence="2">
    <location>
        <begin position="288"/>
        <end position="308"/>
    </location>
</feature>
<feature type="transmembrane region" description="Helical" evidence="2">
    <location>
        <begin position="320"/>
        <end position="340"/>
    </location>
</feature>
<feature type="transmembrane region" description="Helical" evidence="2">
    <location>
        <begin position="347"/>
        <end position="367"/>
    </location>
</feature>
<feature type="binding site" description="axial binding residue" evidence="2">
    <location>
        <position position="83"/>
    </location>
    <ligand>
        <name>heme b</name>
        <dbReference type="ChEBI" id="CHEBI:60344"/>
        <label>b562</label>
    </ligand>
    <ligandPart>
        <name>Fe</name>
        <dbReference type="ChEBI" id="CHEBI:18248"/>
    </ligandPart>
</feature>
<feature type="binding site" description="axial binding residue" evidence="2">
    <location>
        <position position="97"/>
    </location>
    <ligand>
        <name>heme b</name>
        <dbReference type="ChEBI" id="CHEBI:60344"/>
        <label>b566</label>
    </ligand>
    <ligandPart>
        <name>Fe</name>
        <dbReference type="ChEBI" id="CHEBI:18248"/>
    </ligandPart>
</feature>
<feature type="binding site" description="axial binding residue" evidence="2">
    <location>
        <position position="182"/>
    </location>
    <ligand>
        <name>heme b</name>
        <dbReference type="ChEBI" id="CHEBI:60344"/>
        <label>b562</label>
    </ligand>
    <ligandPart>
        <name>Fe</name>
        <dbReference type="ChEBI" id="CHEBI:18248"/>
    </ligandPart>
</feature>
<feature type="binding site" description="axial binding residue" evidence="2">
    <location>
        <position position="196"/>
    </location>
    <ligand>
        <name>heme b</name>
        <dbReference type="ChEBI" id="CHEBI:60344"/>
        <label>b566</label>
    </ligand>
    <ligandPart>
        <name>Fe</name>
        <dbReference type="ChEBI" id="CHEBI:18248"/>
    </ligandPart>
</feature>
<feature type="binding site" evidence="2">
    <location>
        <position position="201"/>
    </location>
    <ligand>
        <name>a ubiquinone</name>
        <dbReference type="ChEBI" id="CHEBI:16389"/>
    </ligand>
</feature>
<geneLocation type="mitochondrion"/>
<name>CYB_CHEME</name>
<keyword id="KW-0249">Electron transport</keyword>
<keyword id="KW-0349">Heme</keyword>
<keyword id="KW-0408">Iron</keyword>
<keyword id="KW-0472">Membrane</keyword>
<keyword id="KW-0479">Metal-binding</keyword>
<keyword id="KW-0496">Mitochondrion</keyword>
<keyword id="KW-0999">Mitochondrion inner membrane</keyword>
<keyword id="KW-0679">Respiratory chain</keyword>
<keyword id="KW-0812">Transmembrane</keyword>
<keyword id="KW-1133">Transmembrane helix</keyword>
<keyword id="KW-0813">Transport</keyword>
<keyword id="KW-0830">Ubiquinone</keyword>
<proteinExistence type="inferred from homology"/>
<comment type="function">
    <text evidence="2">Component of the ubiquinol-cytochrome c reductase complex (complex III or cytochrome b-c1 complex) that is part of the mitochondrial respiratory chain. The b-c1 complex mediates electron transfer from ubiquinol to cytochrome c. Contributes to the generation of a proton gradient across the mitochondrial membrane that is then used for ATP synthesis.</text>
</comment>
<comment type="cofactor">
    <cofactor evidence="2">
        <name>heme b</name>
        <dbReference type="ChEBI" id="CHEBI:60344"/>
    </cofactor>
    <text evidence="2">Binds 2 heme b groups non-covalently.</text>
</comment>
<comment type="subunit">
    <text evidence="2">The cytochrome bc1 complex contains 11 subunits: 3 respiratory subunits (MT-CYB, CYC1 and UQCRFS1), 2 core proteins (UQCRC1 and UQCRC2) and 6 low-molecular weight proteins (UQCRH/QCR6, UQCRB/QCR7, UQCRQ/QCR8, UQCR10/QCR9, UQCR11/QCR10 and a cleavage product of UQCRFS1). This cytochrome bc1 complex then forms a dimer.</text>
</comment>
<comment type="subcellular location">
    <subcellularLocation>
        <location evidence="2">Mitochondrion inner membrane</location>
        <topology evidence="2">Multi-pass membrane protein</topology>
    </subcellularLocation>
</comment>
<comment type="miscellaneous">
    <text evidence="1">Heme 1 (or BL or b562) is low-potential and absorbs at about 562 nm, and heme 2 (or BH or b566) is high-potential and absorbs at about 566 nm.</text>
</comment>
<comment type="similarity">
    <text evidence="3 4">Belongs to the cytochrome b family.</text>
</comment>
<comment type="caution">
    <text evidence="2">The full-length protein contains only eight transmembrane helices, not nine as predicted by bioinformatics tools.</text>
</comment>
<protein>
    <recommendedName>
        <fullName>Cytochrome b</fullName>
    </recommendedName>
    <alternativeName>
        <fullName>Complex III subunit 3</fullName>
    </alternativeName>
    <alternativeName>
        <fullName>Complex III subunit III</fullName>
    </alternativeName>
    <alternativeName>
        <fullName>Cytochrome b-c1 complex subunit 3</fullName>
    </alternativeName>
    <alternativeName>
        <fullName>Ubiquinol-cytochrome-c reductase complex cytochrome b subunit</fullName>
    </alternativeName>
</protein>